<proteinExistence type="inferred from homology"/>
<organism>
    <name type="scientific">Oenococcus oeni (strain ATCC BAA-331 / PSU-1)</name>
    <dbReference type="NCBI Taxonomy" id="203123"/>
    <lineage>
        <taxon>Bacteria</taxon>
        <taxon>Bacillati</taxon>
        <taxon>Bacillota</taxon>
        <taxon>Bacilli</taxon>
        <taxon>Lactobacillales</taxon>
        <taxon>Lactobacillaceae</taxon>
        <taxon>Oenococcus</taxon>
    </lineage>
</organism>
<keyword id="KW-1185">Reference proteome</keyword>
<keyword id="KW-0687">Ribonucleoprotein</keyword>
<keyword id="KW-0689">Ribosomal protein</keyword>
<keyword id="KW-0694">RNA-binding</keyword>
<keyword id="KW-0699">rRNA-binding</keyword>
<protein>
    <recommendedName>
        <fullName evidence="1">Large ribosomal subunit protein uL22</fullName>
    </recommendedName>
    <alternativeName>
        <fullName evidence="2">50S ribosomal protein L22</fullName>
    </alternativeName>
</protein>
<sequence length="120" mass="13117">MAENVTSAKATAFQVRIAPRKARLVLDTVRGKSVNEAYAILKFLPNTGTEPVYKVLNSAVANAENNFALDRADLVIKEAYANEGPTMKRFRPRAKGTASKINKRTSHITIVVSENDKKGA</sequence>
<comment type="function">
    <text evidence="1">This protein binds specifically to 23S rRNA; its binding is stimulated by other ribosomal proteins, e.g. L4, L17, and L20. It is important during the early stages of 50S assembly. It makes multiple contacts with different domains of the 23S rRNA in the assembled 50S subunit and ribosome (By similarity).</text>
</comment>
<comment type="function">
    <text evidence="1">The globular domain of the protein is located near the polypeptide exit tunnel on the outside of the subunit, while an extended beta-hairpin is found that lines the wall of the exit tunnel in the center of the 70S ribosome.</text>
</comment>
<comment type="subunit">
    <text evidence="1">Part of the 50S ribosomal subunit.</text>
</comment>
<comment type="similarity">
    <text evidence="1">Belongs to the universal ribosomal protein uL22 family.</text>
</comment>
<gene>
    <name evidence="1" type="primary">rplV</name>
    <name type="ordered locus">OEOE_0600</name>
</gene>
<name>RL22_OENOB</name>
<reference key="1">
    <citation type="journal article" date="2006" name="Proc. Natl. Acad. Sci. U.S.A.">
        <title>Comparative genomics of the lactic acid bacteria.</title>
        <authorList>
            <person name="Makarova K.S."/>
            <person name="Slesarev A."/>
            <person name="Wolf Y.I."/>
            <person name="Sorokin A."/>
            <person name="Mirkin B."/>
            <person name="Koonin E.V."/>
            <person name="Pavlov A."/>
            <person name="Pavlova N."/>
            <person name="Karamychev V."/>
            <person name="Polouchine N."/>
            <person name="Shakhova V."/>
            <person name="Grigoriev I."/>
            <person name="Lou Y."/>
            <person name="Rohksar D."/>
            <person name="Lucas S."/>
            <person name="Huang K."/>
            <person name="Goodstein D.M."/>
            <person name="Hawkins T."/>
            <person name="Plengvidhya V."/>
            <person name="Welker D."/>
            <person name="Hughes J."/>
            <person name="Goh Y."/>
            <person name="Benson A."/>
            <person name="Baldwin K."/>
            <person name="Lee J.-H."/>
            <person name="Diaz-Muniz I."/>
            <person name="Dosti B."/>
            <person name="Smeianov V."/>
            <person name="Wechter W."/>
            <person name="Barabote R."/>
            <person name="Lorca G."/>
            <person name="Altermann E."/>
            <person name="Barrangou R."/>
            <person name="Ganesan B."/>
            <person name="Xie Y."/>
            <person name="Rawsthorne H."/>
            <person name="Tamir D."/>
            <person name="Parker C."/>
            <person name="Breidt F."/>
            <person name="Broadbent J.R."/>
            <person name="Hutkins R."/>
            <person name="O'Sullivan D."/>
            <person name="Steele J."/>
            <person name="Unlu G."/>
            <person name="Saier M.H. Jr."/>
            <person name="Klaenhammer T."/>
            <person name="Richardson P."/>
            <person name="Kozyavkin S."/>
            <person name="Weimer B.C."/>
            <person name="Mills D.A."/>
        </authorList>
    </citation>
    <scope>NUCLEOTIDE SEQUENCE [LARGE SCALE GENOMIC DNA]</scope>
    <source>
        <strain>ATCC BAA-331 / PSU-1</strain>
    </source>
</reference>
<accession>Q04G80</accession>
<dbReference type="EMBL" id="CP000411">
    <property type="protein sequence ID" value="ABJ56542.1"/>
    <property type="molecule type" value="Genomic_DNA"/>
</dbReference>
<dbReference type="RefSeq" id="WP_002818459.1">
    <property type="nucleotide sequence ID" value="NC_008528.1"/>
</dbReference>
<dbReference type="SMR" id="Q04G80"/>
<dbReference type="STRING" id="203123.OEOE_0600"/>
<dbReference type="GeneID" id="75065422"/>
<dbReference type="KEGG" id="ooe:OEOE_0600"/>
<dbReference type="eggNOG" id="COG0091">
    <property type="taxonomic scope" value="Bacteria"/>
</dbReference>
<dbReference type="HOGENOM" id="CLU_083987_3_3_9"/>
<dbReference type="Proteomes" id="UP000000774">
    <property type="component" value="Chromosome"/>
</dbReference>
<dbReference type="GO" id="GO:0022625">
    <property type="term" value="C:cytosolic large ribosomal subunit"/>
    <property type="evidence" value="ECO:0007669"/>
    <property type="project" value="TreeGrafter"/>
</dbReference>
<dbReference type="GO" id="GO:0019843">
    <property type="term" value="F:rRNA binding"/>
    <property type="evidence" value="ECO:0007669"/>
    <property type="project" value="UniProtKB-UniRule"/>
</dbReference>
<dbReference type="GO" id="GO:0003735">
    <property type="term" value="F:structural constituent of ribosome"/>
    <property type="evidence" value="ECO:0007669"/>
    <property type="project" value="InterPro"/>
</dbReference>
<dbReference type="GO" id="GO:0006412">
    <property type="term" value="P:translation"/>
    <property type="evidence" value="ECO:0007669"/>
    <property type="project" value="UniProtKB-UniRule"/>
</dbReference>
<dbReference type="CDD" id="cd00336">
    <property type="entry name" value="Ribosomal_L22"/>
    <property type="match status" value="1"/>
</dbReference>
<dbReference type="Gene3D" id="3.90.470.10">
    <property type="entry name" value="Ribosomal protein L22/L17"/>
    <property type="match status" value="1"/>
</dbReference>
<dbReference type="HAMAP" id="MF_01331_B">
    <property type="entry name" value="Ribosomal_uL22_B"/>
    <property type="match status" value="1"/>
</dbReference>
<dbReference type="InterPro" id="IPR001063">
    <property type="entry name" value="Ribosomal_uL22"/>
</dbReference>
<dbReference type="InterPro" id="IPR005727">
    <property type="entry name" value="Ribosomal_uL22_bac/chlpt-type"/>
</dbReference>
<dbReference type="InterPro" id="IPR047867">
    <property type="entry name" value="Ribosomal_uL22_bac/org-type"/>
</dbReference>
<dbReference type="InterPro" id="IPR036394">
    <property type="entry name" value="Ribosomal_uL22_sf"/>
</dbReference>
<dbReference type="NCBIfam" id="TIGR01044">
    <property type="entry name" value="rplV_bact"/>
    <property type="match status" value="1"/>
</dbReference>
<dbReference type="PANTHER" id="PTHR13501">
    <property type="entry name" value="CHLOROPLAST 50S RIBOSOMAL PROTEIN L22-RELATED"/>
    <property type="match status" value="1"/>
</dbReference>
<dbReference type="PANTHER" id="PTHR13501:SF8">
    <property type="entry name" value="LARGE RIBOSOMAL SUBUNIT PROTEIN UL22M"/>
    <property type="match status" value="1"/>
</dbReference>
<dbReference type="Pfam" id="PF00237">
    <property type="entry name" value="Ribosomal_L22"/>
    <property type="match status" value="1"/>
</dbReference>
<dbReference type="SUPFAM" id="SSF54843">
    <property type="entry name" value="Ribosomal protein L22"/>
    <property type="match status" value="1"/>
</dbReference>
<evidence type="ECO:0000255" key="1">
    <source>
        <dbReference type="HAMAP-Rule" id="MF_01331"/>
    </source>
</evidence>
<evidence type="ECO:0000305" key="2"/>
<feature type="chain" id="PRO_0000354500" description="Large ribosomal subunit protein uL22">
    <location>
        <begin position="1"/>
        <end position="120"/>
    </location>
</feature>